<proteinExistence type="inferred from homology"/>
<reference key="1">
    <citation type="journal article" date="2006" name="J. Bacteriol.">
        <title>Living with genome instability: the adaptation of phytoplasmas to diverse environments of their insect and plant hosts.</title>
        <authorList>
            <person name="Bai X."/>
            <person name="Zhang J."/>
            <person name="Ewing A."/>
            <person name="Miller S.A."/>
            <person name="Jancso Radek A."/>
            <person name="Shevchenko D.V."/>
            <person name="Tsukerman K."/>
            <person name="Walunas T."/>
            <person name="Lapidus A."/>
            <person name="Campbell J.W."/>
            <person name="Hogenhout S.A."/>
        </authorList>
    </citation>
    <scope>NUCLEOTIDE SEQUENCE [LARGE SCALE GENOMIC DNA]</scope>
    <source>
        <strain>AYWB</strain>
    </source>
</reference>
<protein>
    <recommendedName>
        <fullName evidence="1">Large ribosomal subunit protein uL1</fullName>
    </recommendedName>
    <alternativeName>
        <fullName evidence="2">50S ribosomal protein L1</fullName>
    </alternativeName>
</protein>
<gene>
    <name evidence="1" type="primary">rplA</name>
    <name type="ordered locus">AYWB_464</name>
</gene>
<name>RL1_AYWBP</name>
<accession>Q2NJ12</accession>
<evidence type="ECO:0000255" key="1">
    <source>
        <dbReference type="HAMAP-Rule" id="MF_01318"/>
    </source>
</evidence>
<evidence type="ECO:0000305" key="2"/>
<keyword id="KW-0678">Repressor</keyword>
<keyword id="KW-0687">Ribonucleoprotein</keyword>
<keyword id="KW-0689">Ribosomal protein</keyword>
<keyword id="KW-0694">RNA-binding</keyword>
<keyword id="KW-0699">rRNA-binding</keyword>
<keyword id="KW-0810">Translation regulation</keyword>
<keyword id="KW-0820">tRNA-binding</keyword>
<dbReference type="EMBL" id="CP000061">
    <property type="protein sequence ID" value="ABC65581.1"/>
    <property type="status" value="ALT_INIT"/>
    <property type="molecule type" value="Genomic_DNA"/>
</dbReference>
<dbReference type="RefSeq" id="WP_011412745.1">
    <property type="nucleotide sequence ID" value="NC_007716.1"/>
</dbReference>
<dbReference type="SMR" id="Q2NJ12"/>
<dbReference type="STRING" id="322098.AYWB_464"/>
<dbReference type="KEGG" id="ayw:AYWB_464"/>
<dbReference type="eggNOG" id="COG0081">
    <property type="taxonomic scope" value="Bacteria"/>
</dbReference>
<dbReference type="HOGENOM" id="CLU_062853_0_0_14"/>
<dbReference type="OrthoDB" id="9803740at2"/>
<dbReference type="Proteomes" id="UP000001934">
    <property type="component" value="Chromosome"/>
</dbReference>
<dbReference type="GO" id="GO:0015934">
    <property type="term" value="C:large ribosomal subunit"/>
    <property type="evidence" value="ECO:0007669"/>
    <property type="project" value="InterPro"/>
</dbReference>
<dbReference type="GO" id="GO:0019843">
    <property type="term" value="F:rRNA binding"/>
    <property type="evidence" value="ECO:0007669"/>
    <property type="project" value="UniProtKB-UniRule"/>
</dbReference>
<dbReference type="GO" id="GO:0003735">
    <property type="term" value="F:structural constituent of ribosome"/>
    <property type="evidence" value="ECO:0007669"/>
    <property type="project" value="InterPro"/>
</dbReference>
<dbReference type="GO" id="GO:0000049">
    <property type="term" value="F:tRNA binding"/>
    <property type="evidence" value="ECO:0007669"/>
    <property type="project" value="UniProtKB-KW"/>
</dbReference>
<dbReference type="GO" id="GO:0006417">
    <property type="term" value="P:regulation of translation"/>
    <property type="evidence" value="ECO:0007669"/>
    <property type="project" value="UniProtKB-KW"/>
</dbReference>
<dbReference type="GO" id="GO:0006412">
    <property type="term" value="P:translation"/>
    <property type="evidence" value="ECO:0007669"/>
    <property type="project" value="UniProtKB-UniRule"/>
</dbReference>
<dbReference type="CDD" id="cd00403">
    <property type="entry name" value="Ribosomal_L1"/>
    <property type="match status" value="1"/>
</dbReference>
<dbReference type="FunFam" id="3.40.50.790:FF:000001">
    <property type="entry name" value="50S ribosomal protein L1"/>
    <property type="match status" value="1"/>
</dbReference>
<dbReference type="Gene3D" id="3.30.190.20">
    <property type="match status" value="1"/>
</dbReference>
<dbReference type="Gene3D" id="3.40.50.790">
    <property type="match status" value="1"/>
</dbReference>
<dbReference type="HAMAP" id="MF_01318_B">
    <property type="entry name" value="Ribosomal_uL1_B"/>
    <property type="match status" value="1"/>
</dbReference>
<dbReference type="InterPro" id="IPR005878">
    <property type="entry name" value="Ribosom_uL1_bac-type"/>
</dbReference>
<dbReference type="InterPro" id="IPR002143">
    <property type="entry name" value="Ribosomal_uL1"/>
</dbReference>
<dbReference type="InterPro" id="IPR023674">
    <property type="entry name" value="Ribosomal_uL1-like"/>
</dbReference>
<dbReference type="InterPro" id="IPR028364">
    <property type="entry name" value="Ribosomal_uL1/biogenesis"/>
</dbReference>
<dbReference type="InterPro" id="IPR016095">
    <property type="entry name" value="Ribosomal_uL1_3-a/b-sand"/>
</dbReference>
<dbReference type="InterPro" id="IPR023673">
    <property type="entry name" value="Ribosomal_uL1_CS"/>
</dbReference>
<dbReference type="NCBIfam" id="TIGR01169">
    <property type="entry name" value="rplA_bact"/>
    <property type="match status" value="1"/>
</dbReference>
<dbReference type="PANTHER" id="PTHR36427">
    <property type="entry name" value="54S RIBOSOMAL PROTEIN L1, MITOCHONDRIAL"/>
    <property type="match status" value="1"/>
</dbReference>
<dbReference type="PANTHER" id="PTHR36427:SF3">
    <property type="entry name" value="LARGE RIBOSOMAL SUBUNIT PROTEIN UL1M"/>
    <property type="match status" value="1"/>
</dbReference>
<dbReference type="Pfam" id="PF00687">
    <property type="entry name" value="Ribosomal_L1"/>
    <property type="match status" value="1"/>
</dbReference>
<dbReference type="PIRSF" id="PIRSF002155">
    <property type="entry name" value="Ribosomal_L1"/>
    <property type="match status" value="1"/>
</dbReference>
<dbReference type="SUPFAM" id="SSF56808">
    <property type="entry name" value="Ribosomal protein L1"/>
    <property type="match status" value="1"/>
</dbReference>
<dbReference type="PROSITE" id="PS01199">
    <property type="entry name" value="RIBOSOMAL_L1"/>
    <property type="match status" value="1"/>
</dbReference>
<comment type="function">
    <text evidence="1">Binds directly to 23S rRNA. The L1 stalk is quite mobile in the ribosome, and is involved in E site tRNA release.</text>
</comment>
<comment type="function">
    <text evidence="1">Protein L1 is also a translational repressor protein, it controls the translation of the L11 operon by binding to its mRNA.</text>
</comment>
<comment type="subunit">
    <text evidence="1">Part of the 50S ribosomal subunit.</text>
</comment>
<comment type="similarity">
    <text evidence="1">Belongs to the universal ribosomal protein uL1 family.</text>
</comment>
<comment type="sequence caution" evidence="2">
    <conflict type="erroneous initiation">
        <sequence resource="EMBL-CDS" id="ABC65581"/>
    </conflict>
</comment>
<organism>
    <name type="scientific">Aster yellows witches'-broom phytoplasma (strain AYWB)</name>
    <dbReference type="NCBI Taxonomy" id="322098"/>
    <lineage>
        <taxon>Bacteria</taxon>
        <taxon>Bacillati</taxon>
        <taxon>Mycoplasmatota</taxon>
        <taxon>Mollicutes</taxon>
        <taxon>Acholeplasmatales</taxon>
        <taxon>Acholeplasmataceae</taxon>
        <taxon>Candidatus Phytoplasma</taxon>
        <taxon>16SrI (Aster yellows group)</taxon>
    </lineage>
</organism>
<feature type="chain" id="PRO_0000307649" description="Large ribosomal subunit protein uL1">
    <location>
        <begin position="1"/>
        <end position="230"/>
    </location>
</feature>
<sequence length="230" mass="25419">MKRGKKYLTSLRIFDVKKTYPLQEAISLAKQTQVAKFDATVECAFHLNLDLKKVDQNLRGALVLPHGTGKVLKVAVLAKGEQAKQAQEAQADYVGDQDLIDKIAKNWFDFDVLVATPEMMPQLSKLGRLLGPKGLMPNPKTGTVTNDVLQAVKEIKNGKIEYRLDKSGNIHTILGKVSFDEAKLLENLKTLYLQLMAVKPRTVKGTYIKSVTISTTMAPGIKIDPVTISQ</sequence>